<evidence type="ECO:0000255" key="1">
    <source>
        <dbReference type="HAMAP-Rule" id="MF_00815"/>
    </source>
</evidence>
<accession>B2SQB1</accession>
<reference key="1">
    <citation type="journal article" date="2008" name="BMC Genomics">
        <title>Genome sequence and rapid evolution of the rice pathogen Xanthomonas oryzae pv. oryzae PXO99A.</title>
        <authorList>
            <person name="Salzberg S.L."/>
            <person name="Sommer D.D."/>
            <person name="Schatz M.C."/>
            <person name="Phillippy A.M."/>
            <person name="Rabinowicz P.D."/>
            <person name="Tsuge S."/>
            <person name="Furutani A."/>
            <person name="Ochiai H."/>
            <person name="Delcher A.L."/>
            <person name="Kelley D."/>
            <person name="Madupu R."/>
            <person name="Puiu D."/>
            <person name="Radune D."/>
            <person name="Shumway M."/>
            <person name="Trapnell C."/>
            <person name="Aparna G."/>
            <person name="Jha G."/>
            <person name="Pandey A."/>
            <person name="Patil P.B."/>
            <person name="Ishihara H."/>
            <person name="Meyer D.F."/>
            <person name="Szurek B."/>
            <person name="Verdier V."/>
            <person name="Koebnik R."/>
            <person name="Dow J.M."/>
            <person name="Ryan R.P."/>
            <person name="Hirata H."/>
            <person name="Tsuyumu S."/>
            <person name="Won Lee S."/>
            <person name="Seo Y.-S."/>
            <person name="Sriariyanum M."/>
            <person name="Ronald P.C."/>
            <person name="Sonti R.V."/>
            <person name="Van Sluys M.-A."/>
            <person name="Leach J.E."/>
            <person name="White F.F."/>
            <person name="Bogdanove A.J."/>
        </authorList>
    </citation>
    <scope>NUCLEOTIDE SEQUENCE [LARGE SCALE GENOMIC DNA]</scope>
    <source>
        <strain>PXO99A</strain>
    </source>
</reference>
<protein>
    <recommendedName>
        <fullName evidence="1">ATP synthase gamma chain</fullName>
    </recommendedName>
    <alternativeName>
        <fullName evidence="1">ATP synthase F1 sector gamma subunit</fullName>
    </alternativeName>
    <alternativeName>
        <fullName evidence="1">F-ATPase gamma subunit</fullName>
    </alternativeName>
</protein>
<name>ATPG_XANOP</name>
<comment type="function">
    <text evidence="1">Produces ATP from ADP in the presence of a proton gradient across the membrane. The gamma chain is believed to be important in regulating ATPase activity and the flow of protons through the CF(0) complex.</text>
</comment>
<comment type="subunit">
    <text evidence="1">F-type ATPases have 2 components, CF(1) - the catalytic core - and CF(0) - the membrane proton channel. CF(1) has five subunits: alpha(3), beta(3), gamma(1), delta(1), epsilon(1). CF(0) has three main subunits: a, b and c.</text>
</comment>
<comment type="subcellular location">
    <subcellularLocation>
        <location evidence="1">Cell inner membrane</location>
        <topology evidence="1">Peripheral membrane protein</topology>
    </subcellularLocation>
</comment>
<comment type="similarity">
    <text evidence="1">Belongs to the ATPase gamma chain family.</text>
</comment>
<proteinExistence type="inferred from homology"/>
<sequence length="287" mass="31913">MAGGREIKTKIKSVQNTRKVTRALEMVSASKIRKAQERMKTSRPYAQAMKQVIGHLAQASTDFQHPFLIEREQVKRVGYIVISSDRGLAGGLNNNLFRKMLGEVRPWQGTGAEIDVVTIGQKASAFFRRIKVNMVGSVTHLGDSPQVEQLIGVIKVMIDAFIEGKVDRVYLVYNRFVNTMTQKASFDQLLPLPAAEHKVAHHDWDYLYEPDAASVLEHVMTRYIESLVYQAVLENVASEHAARMVAMKAASDNANKMIGTLQLVYNKARQAAITQEISEIVSGAAAV</sequence>
<feature type="chain" id="PRO_1000134222" description="ATP synthase gamma chain">
    <location>
        <begin position="1"/>
        <end position="287"/>
    </location>
</feature>
<keyword id="KW-0066">ATP synthesis</keyword>
<keyword id="KW-0997">Cell inner membrane</keyword>
<keyword id="KW-1003">Cell membrane</keyword>
<keyword id="KW-0139">CF(1)</keyword>
<keyword id="KW-0375">Hydrogen ion transport</keyword>
<keyword id="KW-0406">Ion transport</keyword>
<keyword id="KW-0472">Membrane</keyword>
<keyword id="KW-0813">Transport</keyword>
<organism>
    <name type="scientific">Xanthomonas oryzae pv. oryzae (strain PXO99A)</name>
    <dbReference type="NCBI Taxonomy" id="360094"/>
    <lineage>
        <taxon>Bacteria</taxon>
        <taxon>Pseudomonadati</taxon>
        <taxon>Pseudomonadota</taxon>
        <taxon>Gammaproteobacteria</taxon>
        <taxon>Lysobacterales</taxon>
        <taxon>Lysobacteraceae</taxon>
        <taxon>Xanthomonas</taxon>
    </lineage>
</organism>
<gene>
    <name evidence="1" type="primary">atpG</name>
    <name type="ordered locus">PXO_03112</name>
</gene>
<dbReference type="EMBL" id="CP000967">
    <property type="protein sequence ID" value="ACD61109.1"/>
    <property type="molecule type" value="Genomic_DNA"/>
</dbReference>
<dbReference type="RefSeq" id="WP_011257624.1">
    <property type="nucleotide sequence ID" value="NC_010717.2"/>
</dbReference>
<dbReference type="SMR" id="B2SQB1"/>
<dbReference type="KEGG" id="xop:PXO_03112"/>
<dbReference type="eggNOG" id="COG0224">
    <property type="taxonomic scope" value="Bacteria"/>
</dbReference>
<dbReference type="HOGENOM" id="CLU_050669_0_1_6"/>
<dbReference type="Proteomes" id="UP000001740">
    <property type="component" value="Chromosome"/>
</dbReference>
<dbReference type="GO" id="GO:0005886">
    <property type="term" value="C:plasma membrane"/>
    <property type="evidence" value="ECO:0007669"/>
    <property type="project" value="UniProtKB-SubCell"/>
</dbReference>
<dbReference type="GO" id="GO:0045259">
    <property type="term" value="C:proton-transporting ATP synthase complex"/>
    <property type="evidence" value="ECO:0007669"/>
    <property type="project" value="UniProtKB-KW"/>
</dbReference>
<dbReference type="GO" id="GO:0005524">
    <property type="term" value="F:ATP binding"/>
    <property type="evidence" value="ECO:0007669"/>
    <property type="project" value="UniProtKB-UniRule"/>
</dbReference>
<dbReference type="GO" id="GO:0046933">
    <property type="term" value="F:proton-transporting ATP synthase activity, rotational mechanism"/>
    <property type="evidence" value="ECO:0007669"/>
    <property type="project" value="UniProtKB-UniRule"/>
</dbReference>
<dbReference type="GO" id="GO:0042777">
    <property type="term" value="P:proton motive force-driven plasma membrane ATP synthesis"/>
    <property type="evidence" value="ECO:0007669"/>
    <property type="project" value="UniProtKB-UniRule"/>
</dbReference>
<dbReference type="CDD" id="cd12151">
    <property type="entry name" value="F1-ATPase_gamma"/>
    <property type="match status" value="1"/>
</dbReference>
<dbReference type="FunFam" id="1.10.287.80:FF:000005">
    <property type="entry name" value="ATP synthase gamma chain"/>
    <property type="match status" value="1"/>
</dbReference>
<dbReference type="FunFam" id="3.40.1380.10:FF:000007">
    <property type="entry name" value="ATP synthase gamma chain"/>
    <property type="match status" value="1"/>
</dbReference>
<dbReference type="Gene3D" id="3.40.1380.10">
    <property type="match status" value="1"/>
</dbReference>
<dbReference type="Gene3D" id="1.10.287.80">
    <property type="entry name" value="ATP synthase, gamma subunit, helix hairpin domain"/>
    <property type="match status" value="1"/>
</dbReference>
<dbReference type="HAMAP" id="MF_00815">
    <property type="entry name" value="ATP_synth_gamma_bact"/>
    <property type="match status" value="1"/>
</dbReference>
<dbReference type="InterPro" id="IPR035968">
    <property type="entry name" value="ATP_synth_F1_ATPase_gsu"/>
</dbReference>
<dbReference type="InterPro" id="IPR000131">
    <property type="entry name" value="ATP_synth_F1_gsu"/>
</dbReference>
<dbReference type="InterPro" id="IPR023632">
    <property type="entry name" value="ATP_synth_F1_gsu_CS"/>
</dbReference>
<dbReference type="NCBIfam" id="TIGR01146">
    <property type="entry name" value="ATPsyn_F1gamma"/>
    <property type="match status" value="1"/>
</dbReference>
<dbReference type="NCBIfam" id="NF004144">
    <property type="entry name" value="PRK05621.1-1"/>
    <property type="match status" value="1"/>
</dbReference>
<dbReference type="PANTHER" id="PTHR11693">
    <property type="entry name" value="ATP SYNTHASE GAMMA CHAIN"/>
    <property type="match status" value="1"/>
</dbReference>
<dbReference type="PANTHER" id="PTHR11693:SF22">
    <property type="entry name" value="ATP SYNTHASE SUBUNIT GAMMA, MITOCHONDRIAL"/>
    <property type="match status" value="1"/>
</dbReference>
<dbReference type="Pfam" id="PF00231">
    <property type="entry name" value="ATP-synt"/>
    <property type="match status" value="1"/>
</dbReference>
<dbReference type="PRINTS" id="PR00126">
    <property type="entry name" value="ATPASEGAMMA"/>
</dbReference>
<dbReference type="SUPFAM" id="SSF52943">
    <property type="entry name" value="ATP synthase (F1-ATPase), gamma subunit"/>
    <property type="match status" value="1"/>
</dbReference>
<dbReference type="PROSITE" id="PS00153">
    <property type="entry name" value="ATPASE_GAMMA"/>
    <property type="match status" value="1"/>
</dbReference>